<proteinExistence type="inferred from homology"/>
<comment type="function">
    <text evidence="1">Allows the formation of correctly charged Asn-tRNA(Asn) or Gln-tRNA(Gln) through the transamidation of misacylated Asp-tRNA(Asn) or Glu-tRNA(Gln) in organisms which lack either or both of asparaginyl-tRNA or glutaminyl-tRNA synthetases. The reaction takes place in the presence of glutamine and ATP through an activated phospho-Asp-tRNA(Asn) or phospho-Glu-tRNA(Gln).</text>
</comment>
<comment type="catalytic activity">
    <reaction evidence="1">
        <text>L-glutamyl-tRNA(Gln) + L-glutamine + ATP + H2O = L-glutaminyl-tRNA(Gln) + L-glutamate + ADP + phosphate + H(+)</text>
        <dbReference type="Rhea" id="RHEA:17521"/>
        <dbReference type="Rhea" id="RHEA-COMP:9681"/>
        <dbReference type="Rhea" id="RHEA-COMP:9684"/>
        <dbReference type="ChEBI" id="CHEBI:15377"/>
        <dbReference type="ChEBI" id="CHEBI:15378"/>
        <dbReference type="ChEBI" id="CHEBI:29985"/>
        <dbReference type="ChEBI" id="CHEBI:30616"/>
        <dbReference type="ChEBI" id="CHEBI:43474"/>
        <dbReference type="ChEBI" id="CHEBI:58359"/>
        <dbReference type="ChEBI" id="CHEBI:78520"/>
        <dbReference type="ChEBI" id="CHEBI:78521"/>
        <dbReference type="ChEBI" id="CHEBI:456216"/>
    </reaction>
</comment>
<comment type="catalytic activity">
    <reaction evidence="1">
        <text>L-aspartyl-tRNA(Asn) + L-glutamine + ATP + H2O = L-asparaginyl-tRNA(Asn) + L-glutamate + ADP + phosphate + 2 H(+)</text>
        <dbReference type="Rhea" id="RHEA:14513"/>
        <dbReference type="Rhea" id="RHEA-COMP:9674"/>
        <dbReference type="Rhea" id="RHEA-COMP:9677"/>
        <dbReference type="ChEBI" id="CHEBI:15377"/>
        <dbReference type="ChEBI" id="CHEBI:15378"/>
        <dbReference type="ChEBI" id="CHEBI:29985"/>
        <dbReference type="ChEBI" id="CHEBI:30616"/>
        <dbReference type="ChEBI" id="CHEBI:43474"/>
        <dbReference type="ChEBI" id="CHEBI:58359"/>
        <dbReference type="ChEBI" id="CHEBI:78515"/>
        <dbReference type="ChEBI" id="CHEBI:78516"/>
        <dbReference type="ChEBI" id="CHEBI:456216"/>
    </reaction>
</comment>
<comment type="subunit">
    <text evidence="1">Heterotrimer of A, B and C subunits.</text>
</comment>
<comment type="similarity">
    <text evidence="1">Belongs to the GatB/GatE family. GatB subfamily.</text>
</comment>
<keyword id="KW-0067">ATP-binding</keyword>
<keyword id="KW-0436">Ligase</keyword>
<keyword id="KW-0547">Nucleotide-binding</keyword>
<keyword id="KW-0648">Protein biosynthesis</keyword>
<gene>
    <name evidence="1" type="primary">gatB</name>
    <name type="ordered locus">A1G_01095</name>
</gene>
<evidence type="ECO:0000255" key="1">
    <source>
        <dbReference type="HAMAP-Rule" id="MF_00121"/>
    </source>
</evidence>
<reference key="1">
    <citation type="submission" date="2007-09" db="EMBL/GenBank/DDBJ databases">
        <title>Complete genome sequence of Rickettsia rickettsii.</title>
        <authorList>
            <person name="Madan A."/>
            <person name="Fahey J."/>
            <person name="Helton E."/>
            <person name="Ketteman M."/>
            <person name="Madan A."/>
            <person name="Rodrigues S."/>
            <person name="Sanchez A."/>
            <person name="Dasch G."/>
            <person name="Eremeeva M."/>
        </authorList>
    </citation>
    <scope>NUCLEOTIDE SEQUENCE [LARGE SCALE GENOMIC DNA]</scope>
    <source>
        <strain>Sheila Smith</strain>
    </source>
</reference>
<feature type="chain" id="PRO_1000016035" description="Aspartyl/glutamyl-tRNA(Asn/Gln) amidotransferase subunit B">
    <location>
        <begin position="1"/>
        <end position="483"/>
    </location>
</feature>
<protein>
    <recommendedName>
        <fullName evidence="1">Aspartyl/glutamyl-tRNA(Asn/Gln) amidotransferase subunit B</fullName>
        <shortName evidence="1">Asp/Glu-ADT subunit B</shortName>
        <ecNumber evidence="1">6.3.5.-</ecNumber>
    </recommendedName>
</protein>
<accession>A8GQX6</accession>
<dbReference type="EC" id="6.3.5.-" evidence="1"/>
<dbReference type="EMBL" id="CP000848">
    <property type="protein sequence ID" value="ABV75801.1"/>
    <property type="molecule type" value="Genomic_DNA"/>
</dbReference>
<dbReference type="RefSeq" id="WP_012150408.1">
    <property type="nucleotide sequence ID" value="NC_009882.1"/>
</dbReference>
<dbReference type="SMR" id="A8GQX6"/>
<dbReference type="GeneID" id="79936985"/>
<dbReference type="KEGG" id="rri:A1G_01095"/>
<dbReference type="HOGENOM" id="CLU_019240_0_0_5"/>
<dbReference type="Proteomes" id="UP000006832">
    <property type="component" value="Chromosome"/>
</dbReference>
<dbReference type="GO" id="GO:0050566">
    <property type="term" value="F:asparaginyl-tRNA synthase (glutamine-hydrolyzing) activity"/>
    <property type="evidence" value="ECO:0007669"/>
    <property type="project" value="RHEA"/>
</dbReference>
<dbReference type="GO" id="GO:0005524">
    <property type="term" value="F:ATP binding"/>
    <property type="evidence" value="ECO:0007669"/>
    <property type="project" value="UniProtKB-KW"/>
</dbReference>
<dbReference type="GO" id="GO:0050567">
    <property type="term" value="F:glutaminyl-tRNA synthase (glutamine-hydrolyzing) activity"/>
    <property type="evidence" value="ECO:0007669"/>
    <property type="project" value="UniProtKB-UniRule"/>
</dbReference>
<dbReference type="GO" id="GO:0070681">
    <property type="term" value="P:glutaminyl-tRNAGln biosynthesis via transamidation"/>
    <property type="evidence" value="ECO:0007669"/>
    <property type="project" value="TreeGrafter"/>
</dbReference>
<dbReference type="GO" id="GO:0006412">
    <property type="term" value="P:translation"/>
    <property type="evidence" value="ECO:0007669"/>
    <property type="project" value="UniProtKB-UniRule"/>
</dbReference>
<dbReference type="FunFam" id="1.10.10.410:FF:000001">
    <property type="entry name" value="Aspartyl/glutamyl-tRNA(Asn/Gln) amidotransferase subunit B"/>
    <property type="match status" value="1"/>
</dbReference>
<dbReference type="Gene3D" id="1.10.10.410">
    <property type="match status" value="1"/>
</dbReference>
<dbReference type="Gene3D" id="1.10.150.380">
    <property type="entry name" value="GatB domain, N-terminal subdomain"/>
    <property type="match status" value="1"/>
</dbReference>
<dbReference type="HAMAP" id="MF_00121">
    <property type="entry name" value="GatB"/>
    <property type="match status" value="1"/>
</dbReference>
<dbReference type="InterPro" id="IPR017959">
    <property type="entry name" value="Asn/Gln-tRNA_amidoTrfase_suB/E"/>
</dbReference>
<dbReference type="InterPro" id="IPR006075">
    <property type="entry name" value="Asn/Gln-tRNA_Trfase_suB/E_cat"/>
</dbReference>
<dbReference type="InterPro" id="IPR018027">
    <property type="entry name" value="Asn/Gln_amidotransferase"/>
</dbReference>
<dbReference type="InterPro" id="IPR003789">
    <property type="entry name" value="Asn/Gln_tRNA_amidoTrase-B-like"/>
</dbReference>
<dbReference type="InterPro" id="IPR004413">
    <property type="entry name" value="GatB"/>
</dbReference>
<dbReference type="InterPro" id="IPR042114">
    <property type="entry name" value="GatB_C_1"/>
</dbReference>
<dbReference type="InterPro" id="IPR023168">
    <property type="entry name" value="GatB_Yqey_C_2"/>
</dbReference>
<dbReference type="InterPro" id="IPR017958">
    <property type="entry name" value="Gln-tRNA_amidoTrfase_suB_CS"/>
</dbReference>
<dbReference type="InterPro" id="IPR014746">
    <property type="entry name" value="Gln_synth/guanido_kin_cat_dom"/>
</dbReference>
<dbReference type="NCBIfam" id="TIGR00133">
    <property type="entry name" value="gatB"/>
    <property type="match status" value="1"/>
</dbReference>
<dbReference type="NCBIfam" id="NF004012">
    <property type="entry name" value="PRK05477.1-2"/>
    <property type="match status" value="1"/>
</dbReference>
<dbReference type="NCBIfam" id="NF004014">
    <property type="entry name" value="PRK05477.1-4"/>
    <property type="match status" value="1"/>
</dbReference>
<dbReference type="NCBIfam" id="NF004015">
    <property type="entry name" value="PRK05477.1-5"/>
    <property type="match status" value="1"/>
</dbReference>
<dbReference type="PANTHER" id="PTHR11659">
    <property type="entry name" value="GLUTAMYL-TRNA GLN AMIDOTRANSFERASE SUBUNIT B MITOCHONDRIAL AND PROKARYOTIC PET112-RELATED"/>
    <property type="match status" value="1"/>
</dbReference>
<dbReference type="PANTHER" id="PTHR11659:SF0">
    <property type="entry name" value="GLUTAMYL-TRNA(GLN) AMIDOTRANSFERASE SUBUNIT B, MITOCHONDRIAL"/>
    <property type="match status" value="1"/>
</dbReference>
<dbReference type="Pfam" id="PF02934">
    <property type="entry name" value="GatB_N"/>
    <property type="match status" value="1"/>
</dbReference>
<dbReference type="Pfam" id="PF02637">
    <property type="entry name" value="GatB_Yqey"/>
    <property type="match status" value="1"/>
</dbReference>
<dbReference type="SMART" id="SM00845">
    <property type="entry name" value="GatB_Yqey"/>
    <property type="match status" value="1"/>
</dbReference>
<dbReference type="SUPFAM" id="SSF89095">
    <property type="entry name" value="GatB/YqeY motif"/>
    <property type="match status" value="1"/>
</dbReference>
<dbReference type="SUPFAM" id="SSF55931">
    <property type="entry name" value="Glutamine synthetase/guanido kinase"/>
    <property type="match status" value="1"/>
</dbReference>
<dbReference type="PROSITE" id="PS01234">
    <property type="entry name" value="GATB"/>
    <property type="match status" value="1"/>
</dbReference>
<organism>
    <name type="scientific">Rickettsia rickettsii (strain Sheila Smith)</name>
    <dbReference type="NCBI Taxonomy" id="392021"/>
    <lineage>
        <taxon>Bacteria</taxon>
        <taxon>Pseudomonadati</taxon>
        <taxon>Pseudomonadota</taxon>
        <taxon>Alphaproteobacteria</taxon>
        <taxon>Rickettsiales</taxon>
        <taxon>Rickettsiaceae</taxon>
        <taxon>Rickettsieae</taxon>
        <taxon>Rickettsia</taxon>
        <taxon>spotted fever group</taxon>
    </lineage>
</organism>
<sequence>MAYIEGNTGKWEYVIGLEIHAQISSKSKLFSGSSTIFAANPNSQVSYIDAAMPGMLPVLNKHCVHQAIKTGLGLKAKINKYSVFDRKNYFYADLPQGYQISQFYYPIVQNGTMEIPTSTGDLKTIRINRLHLEQDAGKSMHDQSPHYSFIDLNRAGIGLMEIVTEPDISSPEEAAEFVKKLRNLLRYIGSCDGDMEKGSMRCDANISVRRSGEPLGTRCEIKNINSIRNIIKAIEFEAKRQVDLLESGEEIIQETRLFNADSGETRTMRLKEEALDYRYFPDPDLLPLVISDELINELKANLPELPDQKIEKYTKEFSLSKYDAEVIVADESVAEYFEKAANECNPKMLTNWLTSELFGQLNKASIGINECKITPSNFAKLVKLIENDTISGKIAKTVFEIMFETGKAPDKIIEEKGLVQVSDNNVLNTVIDEVIAENPESVEGYRSGKDKLFGFFVGQVMKKTDGKANPTLVNQLLKEKLSS</sequence>
<name>GATB_RICRS</name>